<geneLocation type="chloroplast"/>
<sequence length="120" mass="13860">MFLLHEYDIFWTFLIIASLIPILVFWISGLLAPVSEGPEKLSSYESGIEPMGGAWLQFRIRYYMFALVFVVFDVETVFLYPWAMSFDVLGVSVFIEAFIFVLILVVGLVYAWRKGALEWS</sequence>
<keyword id="KW-0150">Chloroplast</keyword>
<keyword id="KW-0472">Membrane</keyword>
<keyword id="KW-0520">NAD</keyword>
<keyword id="KW-0521">NADP</keyword>
<keyword id="KW-0934">Plastid</keyword>
<keyword id="KW-0618">Plastoquinone</keyword>
<keyword id="KW-0874">Quinone</keyword>
<keyword id="KW-0793">Thylakoid</keyword>
<keyword id="KW-1278">Translocase</keyword>
<keyword id="KW-0812">Transmembrane</keyword>
<keyword id="KW-1133">Transmembrane helix</keyword>
<keyword id="KW-0813">Transport</keyword>
<evidence type="ECO:0000255" key="1">
    <source>
        <dbReference type="HAMAP-Rule" id="MF_01394"/>
    </source>
</evidence>
<dbReference type="EC" id="7.1.1.-" evidence="1"/>
<dbReference type="EMBL" id="AP006714">
    <property type="protein sequence ID" value="BAD27298.1"/>
    <property type="molecule type" value="Genomic_DNA"/>
</dbReference>
<dbReference type="RefSeq" id="YP_009389576.1">
    <property type="nucleotide sequence ID" value="NC_035224.1"/>
</dbReference>
<dbReference type="SMR" id="Q6ENV8"/>
<dbReference type="GeneID" id="33347784"/>
<dbReference type="GO" id="GO:0009535">
    <property type="term" value="C:chloroplast thylakoid membrane"/>
    <property type="evidence" value="ECO:0007669"/>
    <property type="project" value="UniProtKB-SubCell"/>
</dbReference>
<dbReference type="GO" id="GO:0030964">
    <property type="term" value="C:NADH dehydrogenase complex"/>
    <property type="evidence" value="ECO:0007669"/>
    <property type="project" value="TreeGrafter"/>
</dbReference>
<dbReference type="GO" id="GO:0008137">
    <property type="term" value="F:NADH dehydrogenase (ubiquinone) activity"/>
    <property type="evidence" value="ECO:0007669"/>
    <property type="project" value="InterPro"/>
</dbReference>
<dbReference type="GO" id="GO:0048038">
    <property type="term" value="F:quinone binding"/>
    <property type="evidence" value="ECO:0007669"/>
    <property type="project" value="UniProtKB-KW"/>
</dbReference>
<dbReference type="GO" id="GO:0019684">
    <property type="term" value="P:photosynthesis, light reaction"/>
    <property type="evidence" value="ECO:0007669"/>
    <property type="project" value="UniProtKB-UniRule"/>
</dbReference>
<dbReference type="FunFam" id="1.20.58.1610:FF:000001">
    <property type="entry name" value="NAD(P)H-quinone oxidoreductase subunit 3, chloroplastic"/>
    <property type="match status" value="1"/>
</dbReference>
<dbReference type="Gene3D" id="1.20.58.1610">
    <property type="entry name" value="NADH:ubiquinone/plastoquinone oxidoreductase, chain 3"/>
    <property type="match status" value="1"/>
</dbReference>
<dbReference type="HAMAP" id="MF_01394">
    <property type="entry name" value="NDH1_NuoA"/>
    <property type="match status" value="1"/>
</dbReference>
<dbReference type="InterPro" id="IPR023043">
    <property type="entry name" value="NAD(P)H_OxRDtase_bac/plastid"/>
</dbReference>
<dbReference type="InterPro" id="IPR000440">
    <property type="entry name" value="NADH_UbQ/plastoQ_OxRdtase_su3"/>
</dbReference>
<dbReference type="InterPro" id="IPR038430">
    <property type="entry name" value="NDAH_ubi_oxred_su3_sf"/>
</dbReference>
<dbReference type="PANTHER" id="PTHR11058">
    <property type="entry name" value="NADH-UBIQUINONE OXIDOREDUCTASE CHAIN 3"/>
    <property type="match status" value="1"/>
</dbReference>
<dbReference type="PANTHER" id="PTHR11058:SF9">
    <property type="entry name" value="NADH-UBIQUINONE OXIDOREDUCTASE CHAIN 3"/>
    <property type="match status" value="1"/>
</dbReference>
<dbReference type="Pfam" id="PF00507">
    <property type="entry name" value="Oxidored_q4"/>
    <property type="match status" value="1"/>
</dbReference>
<reference key="1">
    <citation type="journal article" date="2004" name="DNA Res.">
        <title>Complete nucleotide sequence of the sugarcane (Saccharum officinarum) chloroplast genome: a comparative analysis of four monocot chloroplast genomes.</title>
        <authorList>
            <person name="Asano T."/>
            <person name="Tsudzuki T."/>
            <person name="Takahashi S."/>
            <person name="Shimada H."/>
            <person name="Kadowaki K."/>
        </authorList>
    </citation>
    <scope>NUCLEOTIDE SEQUENCE [LARGE SCALE GENOMIC DNA]</scope>
</reference>
<comment type="function">
    <text evidence="1">NDH shuttles electrons from NAD(P)H:plastoquinone, via FMN and iron-sulfur (Fe-S) centers, to quinones in the photosynthetic chain and possibly in a chloroplast respiratory chain. The immediate electron acceptor for the enzyme in this species is believed to be plastoquinone. Couples the redox reaction to proton translocation, and thus conserves the redox energy in a proton gradient.</text>
</comment>
<comment type="catalytic activity">
    <reaction evidence="1">
        <text>a plastoquinone + NADH + (n+1) H(+)(in) = a plastoquinol + NAD(+) + n H(+)(out)</text>
        <dbReference type="Rhea" id="RHEA:42608"/>
        <dbReference type="Rhea" id="RHEA-COMP:9561"/>
        <dbReference type="Rhea" id="RHEA-COMP:9562"/>
        <dbReference type="ChEBI" id="CHEBI:15378"/>
        <dbReference type="ChEBI" id="CHEBI:17757"/>
        <dbReference type="ChEBI" id="CHEBI:57540"/>
        <dbReference type="ChEBI" id="CHEBI:57945"/>
        <dbReference type="ChEBI" id="CHEBI:62192"/>
    </reaction>
</comment>
<comment type="catalytic activity">
    <reaction evidence="1">
        <text>a plastoquinone + NADPH + (n+1) H(+)(in) = a plastoquinol + NADP(+) + n H(+)(out)</text>
        <dbReference type="Rhea" id="RHEA:42612"/>
        <dbReference type="Rhea" id="RHEA-COMP:9561"/>
        <dbReference type="Rhea" id="RHEA-COMP:9562"/>
        <dbReference type="ChEBI" id="CHEBI:15378"/>
        <dbReference type="ChEBI" id="CHEBI:17757"/>
        <dbReference type="ChEBI" id="CHEBI:57783"/>
        <dbReference type="ChEBI" id="CHEBI:58349"/>
        <dbReference type="ChEBI" id="CHEBI:62192"/>
    </reaction>
</comment>
<comment type="subunit">
    <text evidence="1">NDH is composed of at least 16 different subunits, 5 of which are encoded in the nucleus.</text>
</comment>
<comment type="subcellular location">
    <subcellularLocation>
        <location evidence="1">Plastid</location>
        <location evidence="1">Chloroplast thylakoid membrane</location>
        <topology evidence="1">Multi-pass membrane protein</topology>
    </subcellularLocation>
</comment>
<comment type="similarity">
    <text evidence="1">Belongs to the complex I subunit 3 family.</text>
</comment>
<organism>
    <name type="scientific">Saccharum officinarum</name>
    <name type="common">Sugarcane</name>
    <dbReference type="NCBI Taxonomy" id="4547"/>
    <lineage>
        <taxon>Eukaryota</taxon>
        <taxon>Viridiplantae</taxon>
        <taxon>Streptophyta</taxon>
        <taxon>Embryophyta</taxon>
        <taxon>Tracheophyta</taxon>
        <taxon>Spermatophyta</taxon>
        <taxon>Magnoliopsida</taxon>
        <taxon>Liliopsida</taxon>
        <taxon>Poales</taxon>
        <taxon>Poaceae</taxon>
        <taxon>PACMAD clade</taxon>
        <taxon>Panicoideae</taxon>
        <taxon>Andropogonodae</taxon>
        <taxon>Andropogoneae</taxon>
        <taxon>Saccharinae</taxon>
        <taxon>Saccharum</taxon>
        <taxon>Saccharum officinarum species complex</taxon>
    </lineage>
</organism>
<proteinExistence type="inferred from homology"/>
<gene>
    <name evidence="1" type="primary">ndhC</name>
</gene>
<feature type="chain" id="PRO_0000226907" description="NAD(P)H-quinone oxidoreductase subunit 3, chloroplastic">
    <location>
        <begin position="1"/>
        <end position="120"/>
    </location>
</feature>
<feature type="transmembrane region" description="Helical" evidence="1">
    <location>
        <begin position="9"/>
        <end position="29"/>
    </location>
</feature>
<feature type="transmembrane region" description="Helical" evidence="1">
    <location>
        <begin position="64"/>
        <end position="84"/>
    </location>
</feature>
<feature type="transmembrane region" description="Helical" evidence="1">
    <location>
        <begin position="88"/>
        <end position="108"/>
    </location>
</feature>
<protein>
    <recommendedName>
        <fullName evidence="1">NAD(P)H-quinone oxidoreductase subunit 3, chloroplastic</fullName>
        <ecNumber evidence="1">7.1.1.-</ecNumber>
    </recommendedName>
    <alternativeName>
        <fullName evidence="1">NAD(P)H dehydrogenase subunit 3</fullName>
    </alternativeName>
    <alternativeName>
        <fullName evidence="1">NADH-plastoquinone oxidoreductase subunit 3</fullName>
    </alternativeName>
</protein>
<name>NU3C_SACOF</name>
<accession>Q6ENV8</accession>